<proteinExistence type="inferred from homology"/>
<organism>
    <name type="scientific">Staphylococcus aureus (strain COL)</name>
    <dbReference type="NCBI Taxonomy" id="93062"/>
    <lineage>
        <taxon>Bacteria</taxon>
        <taxon>Bacillati</taxon>
        <taxon>Bacillota</taxon>
        <taxon>Bacilli</taxon>
        <taxon>Bacillales</taxon>
        <taxon>Staphylococcaceae</taxon>
        <taxon>Staphylococcus</taxon>
    </lineage>
</organism>
<evidence type="ECO:0000255" key="1">
    <source>
        <dbReference type="HAMAP-Rule" id="MF_00114"/>
    </source>
</evidence>
<feature type="chain" id="PRO_0000057256" description="Deoxyribose-phosphate aldolase 2">
    <location>
        <begin position="1"/>
        <end position="220"/>
    </location>
</feature>
<feature type="active site" description="Proton donor/acceptor" evidence="1">
    <location>
        <position position="89"/>
    </location>
</feature>
<feature type="active site" description="Schiff-base intermediate with acetaldehyde" evidence="1">
    <location>
        <position position="151"/>
    </location>
</feature>
<feature type="active site" description="Proton donor/acceptor" evidence="1">
    <location>
        <position position="180"/>
    </location>
</feature>
<reference key="1">
    <citation type="journal article" date="2005" name="J. Bacteriol.">
        <title>Insights on evolution of virulence and resistance from the complete genome analysis of an early methicillin-resistant Staphylococcus aureus strain and a biofilm-producing methicillin-resistant Staphylococcus epidermidis strain.</title>
        <authorList>
            <person name="Gill S.R."/>
            <person name="Fouts D.E."/>
            <person name="Archer G.L."/>
            <person name="Mongodin E.F."/>
            <person name="DeBoy R.T."/>
            <person name="Ravel J."/>
            <person name="Paulsen I.T."/>
            <person name="Kolonay J.F."/>
            <person name="Brinkac L.M."/>
            <person name="Beanan M.J."/>
            <person name="Dodson R.J."/>
            <person name="Daugherty S.C."/>
            <person name="Madupu R."/>
            <person name="Angiuoli S.V."/>
            <person name="Durkin A.S."/>
            <person name="Haft D.H."/>
            <person name="Vamathevan J.J."/>
            <person name="Khouri H."/>
            <person name="Utterback T.R."/>
            <person name="Lee C."/>
            <person name="Dimitrov G."/>
            <person name="Jiang L."/>
            <person name="Qin H."/>
            <person name="Weidman J."/>
            <person name="Tran K."/>
            <person name="Kang K.H."/>
            <person name="Hance I.R."/>
            <person name="Nelson K.E."/>
            <person name="Fraser C.M."/>
        </authorList>
    </citation>
    <scope>NUCLEOTIDE SEQUENCE [LARGE SCALE GENOMIC DNA]</scope>
    <source>
        <strain>COL</strain>
    </source>
</reference>
<comment type="function">
    <text evidence="1">Catalyzes a reversible aldol reaction between acetaldehyde and D-glyceraldehyde 3-phosphate to generate 2-deoxy-D-ribose 5-phosphate.</text>
</comment>
<comment type="catalytic activity">
    <reaction evidence="1">
        <text>2-deoxy-D-ribose 5-phosphate = D-glyceraldehyde 3-phosphate + acetaldehyde</text>
        <dbReference type="Rhea" id="RHEA:12821"/>
        <dbReference type="ChEBI" id="CHEBI:15343"/>
        <dbReference type="ChEBI" id="CHEBI:59776"/>
        <dbReference type="ChEBI" id="CHEBI:62877"/>
        <dbReference type="EC" id="4.1.2.4"/>
    </reaction>
</comment>
<comment type="pathway">
    <text evidence="1">Carbohydrate degradation; 2-deoxy-D-ribose 1-phosphate degradation; D-glyceraldehyde 3-phosphate and acetaldehyde from 2-deoxy-alpha-D-ribose 1-phosphate: step 2/2.</text>
</comment>
<comment type="subcellular location">
    <subcellularLocation>
        <location evidence="1">Cytoplasm</location>
    </subcellularLocation>
</comment>
<comment type="similarity">
    <text evidence="1">Belongs to the DeoC/FbaB aldolase family. DeoC type 1 subfamily.</text>
</comment>
<sequence length="220" mass="23327">MNSAKLIDHTLLKPESTRTQIDQIIDEAKAYHFKSVCVNPTHVKYAAERLADSEVLVCTVIGFPLGASTTATKAFETEDAIQNGADEIDMVINIGALKDGRFDDVQQDIEAVVKAAKGHTVKVIIETVLLDHDEIVKASELTKAAGADFVKTSTGFAGGGATAEDVKLMKDTVGADIEVKASGGVRNLEDFNKMVEAGATRIGASAGVQIMQGLEADSDY</sequence>
<protein>
    <recommendedName>
        <fullName evidence="1">Deoxyribose-phosphate aldolase 2</fullName>
        <shortName evidence="1">DERA 2</shortName>
        <ecNumber evidence="1">4.1.2.4</ecNumber>
    </recommendedName>
    <alternativeName>
        <fullName evidence="1">2-deoxy-D-ribose 5-phosphate aldolase 2</fullName>
    </alternativeName>
    <alternativeName>
        <fullName evidence="1">Phosphodeoxyriboaldolase 2</fullName>
        <shortName evidence="1">Deoxyriboaldolase 2</shortName>
    </alternativeName>
</protein>
<dbReference type="EC" id="4.1.2.4" evidence="1"/>
<dbReference type="EMBL" id="CP000046">
    <property type="protein sequence ID" value="AAW38439.1"/>
    <property type="molecule type" value="Genomic_DNA"/>
</dbReference>
<dbReference type="SMR" id="Q5HE63"/>
<dbReference type="KEGG" id="sac:SACOL2129"/>
<dbReference type="HOGENOM" id="CLU_053595_0_0_9"/>
<dbReference type="UniPathway" id="UPA00002">
    <property type="reaction ID" value="UER00468"/>
</dbReference>
<dbReference type="Proteomes" id="UP000000530">
    <property type="component" value="Chromosome"/>
</dbReference>
<dbReference type="GO" id="GO:0005737">
    <property type="term" value="C:cytoplasm"/>
    <property type="evidence" value="ECO:0007669"/>
    <property type="project" value="UniProtKB-SubCell"/>
</dbReference>
<dbReference type="GO" id="GO:0004139">
    <property type="term" value="F:deoxyribose-phosphate aldolase activity"/>
    <property type="evidence" value="ECO:0007669"/>
    <property type="project" value="UniProtKB-UniRule"/>
</dbReference>
<dbReference type="GO" id="GO:0006018">
    <property type="term" value="P:2-deoxyribose 1-phosphate catabolic process"/>
    <property type="evidence" value="ECO:0007669"/>
    <property type="project" value="UniProtKB-UniRule"/>
</dbReference>
<dbReference type="GO" id="GO:0016052">
    <property type="term" value="P:carbohydrate catabolic process"/>
    <property type="evidence" value="ECO:0007669"/>
    <property type="project" value="TreeGrafter"/>
</dbReference>
<dbReference type="GO" id="GO:0009264">
    <property type="term" value="P:deoxyribonucleotide catabolic process"/>
    <property type="evidence" value="ECO:0007669"/>
    <property type="project" value="InterPro"/>
</dbReference>
<dbReference type="CDD" id="cd00959">
    <property type="entry name" value="DeoC"/>
    <property type="match status" value="1"/>
</dbReference>
<dbReference type="FunFam" id="3.20.20.70:FF:000044">
    <property type="entry name" value="Deoxyribose-phosphate aldolase"/>
    <property type="match status" value="1"/>
</dbReference>
<dbReference type="Gene3D" id="3.20.20.70">
    <property type="entry name" value="Aldolase class I"/>
    <property type="match status" value="1"/>
</dbReference>
<dbReference type="HAMAP" id="MF_00114">
    <property type="entry name" value="DeoC_type1"/>
    <property type="match status" value="1"/>
</dbReference>
<dbReference type="InterPro" id="IPR013785">
    <property type="entry name" value="Aldolase_TIM"/>
</dbReference>
<dbReference type="InterPro" id="IPR011343">
    <property type="entry name" value="DeoC"/>
</dbReference>
<dbReference type="InterPro" id="IPR002915">
    <property type="entry name" value="DeoC/FbaB/LacD_aldolase"/>
</dbReference>
<dbReference type="InterPro" id="IPR028581">
    <property type="entry name" value="DeoC_typeI"/>
</dbReference>
<dbReference type="NCBIfam" id="TIGR00126">
    <property type="entry name" value="deoC"/>
    <property type="match status" value="1"/>
</dbReference>
<dbReference type="PANTHER" id="PTHR10889">
    <property type="entry name" value="DEOXYRIBOSE-PHOSPHATE ALDOLASE"/>
    <property type="match status" value="1"/>
</dbReference>
<dbReference type="PANTHER" id="PTHR10889:SF1">
    <property type="entry name" value="DEOXYRIBOSE-PHOSPHATE ALDOLASE"/>
    <property type="match status" value="1"/>
</dbReference>
<dbReference type="Pfam" id="PF01791">
    <property type="entry name" value="DeoC"/>
    <property type="match status" value="1"/>
</dbReference>
<dbReference type="PIRSF" id="PIRSF001357">
    <property type="entry name" value="DeoC"/>
    <property type="match status" value="1"/>
</dbReference>
<dbReference type="SMART" id="SM01133">
    <property type="entry name" value="DeoC"/>
    <property type="match status" value="1"/>
</dbReference>
<dbReference type="SUPFAM" id="SSF51569">
    <property type="entry name" value="Aldolase"/>
    <property type="match status" value="1"/>
</dbReference>
<accession>Q5HE63</accession>
<name>DEOC2_STAAC</name>
<gene>
    <name evidence="1" type="primary">deoC2</name>
    <name type="ordered locus">SACOL2129</name>
</gene>
<keyword id="KW-0963">Cytoplasm</keyword>
<keyword id="KW-0456">Lyase</keyword>
<keyword id="KW-0704">Schiff base</keyword>